<gene>
    <name evidence="2" type="primary">secY</name>
    <name type="ordered locus">PH1754</name>
</gene>
<name>SECY_PYRHO</name>
<proteinExistence type="inferred from homology"/>
<organism>
    <name type="scientific">Pyrococcus horikoshii (strain ATCC 700860 / DSM 12428 / JCM 9974 / NBRC 100139 / OT-3)</name>
    <dbReference type="NCBI Taxonomy" id="70601"/>
    <lineage>
        <taxon>Archaea</taxon>
        <taxon>Methanobacteriati</taxon>
        <taxon>Methanobacteriota</taxon>
        <taxon>Thermococci</taxon>
        <taxon>Thermococcales</taxon>
        <taxon>Thermococcaceae</taxon>
        <taxon>Pyrococcus</taxon>
    </lineage>
</organism>
<feature type="chain" id="PRO_0000131769" description="Protein translocase subunit SecY">
    <location>
        <begin position="1"/>
        <end position="468"/>
    </location>
</feature>
<feature type="topological domain" description="Cytoplasmic" evidence="1">
    <location>
        <begin position="1"/>
        <end position="20"/>
    </location>
</feature>
<feature type="transmembrane region" description="Helical; Name=Helix 1" evidence="2">
    <location>
        <begin position="21"/>
        <end position="47"/>
    </location>
</feature>
<feature type="topological domain" description="Extracellular" evidence="1">
    <location>
        <begin position="48"/>
        <end position="58"/>
    </location>
</feature>
<feature type="transmembrane region" description="Discontinuously helical; Name=Helix 2" evidence="1">
    <location>
        <begin position="59"/>
        <end position="87"/>
    </location>
</feature>
<feature type="intramembrane region" description="Helical; Name=Helix 2A" evidence="1">
    <location>
        <begin position="59"/>
        <end position="66"/>
    </location>
</feature>
<feature type="intramembrane region" evidence="1">
    <location>
        <begin position="67"/>
        <end position="78"/>
    </location>
</feature>
<feature type="intramembrane region" description="Helical; Name=Helix 2B" evidence="1">
    <location>
        <begin position="79"/>
        <end position="87"/>
    </location>
</feature>
<feature type="topological domain" description="Cytoplasmic" evidence="1">
    <location>
        <begin position="88"/>
        <end position="108"/>
    </location>
</feature>
<feature type="transmembrane region" description="Helical; Name=Helix 3" evidence="2">
    <location>
        <begin position="109"/>
        <end position="133"/>
    </location>
</feature>
<feature type="topological domain" description="Extracellular" evidence="1">
    <location>
        <begin position="134"/>
        <end position="144"/>
    </location>
</feature>
<feature type="transmembrane region" description="Helical; Name=Helix 4" evidence="2">
    <location>
        <begin position="145"/>
        <end position="169"/>
    </location>
</feature>
<feature type="topological domain" description="Cytoplasmic" evidence="1">
    <location>
        <begin position="170"/>
        <end position="175"/>
    </location>
</feature>
<feature type="transmembrane region" description="Helical; Name=Helix 5" evidence="2">
    <location>
        <begin position="176"/>
        <end position="194"/>
    </location>
</feature>
<feature type="topological domain" description="Extracellular" evidence="1">
    <location>
        <begin position="195"/>
        <end position="239"/>
    </location>
</feature>
<feature type="transmembrane region" description="Helical; Name=Helix 6" evidence="2">
    <location>
        <begin position="240"/>
        <end position="261"/>
    </location>
</feature>
<feature type="topological domain" description="Cytoplasmic" evidence="1">
    <location>
        <begin position="262"/>
        <end position="285"/>
    </location>
</feature>
<feature type="transmembrane region" description="Helical; Name=Helix 7" evidence="2">
    <location>
        <begin position="286"/>
        <end position="307"/>
    </location>
</feature>
<feature type="topological domain" description="Extracellular" evidence="1">
    <location>
        <begin position="308"/>
        <end position="346"/>
    </location>
</feature>
<feature type="transmembrane region" description="Helical; Name=Helix 8" evidence="2">
    <location>
        <begin position="347"/>
        <end position="366"/>
    </location>
</feature>
<feature type="topological domain" description="Cytoplasmic" evidence="1">
    <location>
        <begin position="367"/>
        <end position="409"/>
    </location>
</feature>
<feature type="transmembrane region" description="Helical; Name=Helix 9" evidence="2">
    <location>
        <begin position="410"/>
        <end position="428"/>
    </location>
</feature>
<feature type="topological domain" description="Extracellular" evidence="1">
    <location>
        <begin position="429"/>
        <end position="431"/>
    </location>
</feature>
<feature type="transmembrane region" description="Helical; Name=Helix 10" evidence="2">
    <location>
        <begin position="432"/>
        <end position="446"/>
    </location>
</feature>
<feature type="topological domain" description="Cytoplasmic" evidence="1">
    <location>
        <begin position="447"/>
        <end position="468"/>
    </location>
</feature>
<comment type="function">
    <text evidence="2">The central subunit of the protein translocation channel SecYEG. Consists of two halves formed by TMs 1-5 and 6-10. These two domains form a lateral gate at the front which open onto the bilayer between TMs 2 and 7, and are clamped together by SecE at the back. The channel is closed by both a pore ring composed of hydrophobic SecY resides and a short helix (helix 2A) on the extracellular side of the membrane which forms a plug. The plug probably moves laterally to allow the channel to open. The ring and the pore may move independently.</text>
</comment>
<comment type="subunit">
    <text evidence="2">Component of the Sec protein translocase complex. Heterotrimer consisting of alpha (SecY), beta (SecG) and gamma (SecE) subunits. The heterotrimers can form oligomers, although 1 heterotrimer is thought to be able to translocate proteins. Interacts with the ribosome. May interact with SecDF, and other proteins may be involved.</text>
</comment>
<comment type="subcellular location">
    <subcellularLocation>
        <location evidence="2">Cell membrane</location>
        <topology evidence="2">Multi-pass membrane protein</topology>
    </subcellularLocation>
</comment>
<comment type="similarity">
    <text evidence="2">Belongs to the SecY/SEC61-alpha family.</text>
</comment>
<dbReference type="EMBL" id="BA000001">
    <property type="protein sequence ID" value="BAA30868.1"/>
    <property type="molecule type" value="Genomic_DNA"/>
</dbReference>
<dbReference type="PIR" id="E71184">
    <property type="entry name" value="E71184"/>
</dbReference>
<dbReference type="RefSeq" id="WP_010885818.1">
    <property type="nucleotide sequence ID" value="NC_000961.1"/>
</dbReference>
<dbReference type="SMR" id="O59442"/>
<dbReference type="STRING" id="70601.gene:9378751"/>
<dbReference type="EnsemblBacteria" id="BAA30868">
    <property type="protein sequence ID" value="BAA30868"/>
    <property type="gene ID" value="BAA30868"/>
</dbReference>
<dbReference type="GeneID" id="1442599"/>
<dbReference type="KEGG" id="pho:PH1754"/>
<dbReference type="eggNOG" id="arCOG04169">
    <property type="taxonomic scope" value="Archaea"/>
</dbReference>
<dbReference type="OrthoDB" id="371914at2157"/>
<dbReference type="Proteomes" id="UP000000752">
    <property type="component" value="Chromosome"/>
</dbReference>
<dbReference type="GO" id="GO:0005886">
    <property type="term" value="C:plasma membrane"/>
    <property type="evidence" value="ECO:0007669"/>
    <property type="project" value="UniProtKB-SubCell"/>
</dbReference>
<dbReference type="GO" id="GO:0065002">
    <property type="term" value="P:intracellular protein transmembrane transport"/>
    <property type="evidence" value="ECO:0007669"/>
    <property type="project" value="UniProtKB-UniRule"/>
</dbReference>
<dbReference type="GO" id="GO:0006605">
    <property type="term" value="P:protein targeting"/>
    <property type="evidence" value="ECO:0007669"/>
    <property type="project" value="UniProtKB-UniRule"/>
</dbReference>
<dbReference type="Gene3D" id="1.10.3370.10">
    <property type="entry name" value="SecY subunit domain"/>
    <property type="match status" value="1"/>
</dbReference>
<dbReference type="HAMAP" id="MF_01465">
    <property type="entry name" value="SecY"/>
    <property type="match status" value="1"/>
</dbReference>
<dbReference type="InterPro" id="IPR026593">
    <property type="entry name" value="SecY"/>
</dbReference>
<dbReference type="InterPro" id="IPR002208">
    <property type="entry name" value="SecY/SEC61-alpha"/>
</dbReference>
<dbReference type="InterPro" id="IPR030659">
    <property type="entry name" value="SecY_CS"/>
</dbReference>
<dbReference type="InterPro" id="IPR023201">
    <property type="entry name" value="SecY_dom_sf"/>
</dbReference>
<dbReference type="InterPro" id="IPR019561">
    <property type="entry name" value="Translocon_Sec61/SecY_plug_dom"/>
</dbReference>
<dbReference type="NCBIfam" id="TIGR00967">
    <property type="entry name" value="3a0501s007"/>
    <property type="match status" value="1"/>
</dbReference>
<dbReference type="NCBIfam" id="NF006341">
    <property type="entry name" value="PRK08568.1-5"/>
    <property type="match status" value="1"/>
</dbReference>
<dbReference type="PANTHER" id="PTHR10906">
    <property type="entry name" value="SECY/SEC61-ALPHA FAMILY MEMBER"/>
    <property type="match status" value="1"/>
</dbReference>
<dbReference type="Pfam" id="PF10559">
    <property type="entry name" value="Plug_translocon"/>
    <property type="match status" value="1"/>
</dbReference>
<dbReference type="Pfam" id="PF00344">
    <property type="entry name" value="SecY"/>
    <property type="match status" value="1"/>
</dbReference>
<dbReference type="PIRSF" id="PIRSF004557">
    <property type="entry name" value="SecY"/>
    <property type="match status" value="1"/>
</dbReference>
<dbReference type="PRINTS" id="PR00303">
    <property type="entry name" value="SECYTRNLCASE"/>
</dbReference>
<dbReference type="SUPFAM" id="SSF103491">
    <property type="entry name" value="Preprotein translocase SecY subunit"/>
    <property type="match status" value="1"/>
</dbReference>
<dbReference type="PROSITE" id="PS00755">
    <property type="entry name" value="SECY_1"/>
    <property type="match status" value="1"/>
</dbReference>
<dbReference type="PROSITE" id="PS00756">
    <property type="entry name" value="SECY_2"/>
    <property type="match status" value="1"/>
</dbReference>
<accession>O59442</accession>
<reference key="1">
    <citation type="journal article" date="1998" name="DNA Res.">
        <title>Complete sequence and gene organization of the genome of a hyper-thermophilic archaebacterium, Pyrococcus horikoshii OT3.</title>
        <authorList>
            <person name="Kawarabayasi Y."/>
            <person name="Sawada M."/>
            <person name="Horikawa H."/>
            <person name="Haikawa Y."/>
            <person name="Hino Y."/>
            <person name="Yamamoto S."/>
            <person name="Sekine M."/>
            <person name="Baba S."/>
            <person name="Kosugi H."/>
            <person name="Hosoyama A."/>
            <person name="Nagai Y."/>
            <person name="Sakai M."/>
            <person name="Ogura K."/>
            <person name="Otsuka R."/>
            <person name="Nakazawa H."/>
            <person name="Takamiya M."/>
            <person name="Ohfuku Y."/>
            <person name="Funahashi T."/>
            <person name="Tanaka T."/>
            <person name="Kudoh Y."/>
            <person name="Yamazaki J."/>
            <person name="Kushida N."/>
            <person name="Oguchi A."/>
            <person name="Aoki K."/>
            <person name="Yoshizawa T."/>
            <person name="Nakamura Y."/>
            <person name="Robb F.T."/>
            <person name="Horikoshi K."/>
            <person name="Masuchi Y."/>
            <person name="Shizuya H."/>
            <person name="Kikuchi H."/>
        </authorList>
    </citation>
    <scope>NUCLEOTIDE SEQUENCE [LARGE SCALE GENOMIC DNA]</scope>
    <source>
        <strain>ATCC 700860 / DSM 12428 / JCM 9974 / NBRC 100139 / OT-3</strain>
    </source>
</reference>
<protein>
    <recommendedName>
        <fullName evidence="2">Protein translocase subunit SecY</fullName>
    </recommendedName>
    <alternativeName>
        <fullName evidence="2">Protein transport protein SEC61 subunit alpha homolog</fullName>
    </alternativeName>
</protein>
<evidence type="ECO:0000250" key="1"/>
<evidence type="ECO:0000255" key="2">
    <source>
        <dbReference type="HAMAP-Rule" id="MF_01465"/>
    </source>
</evidence>
<sequence>MGARDVIYAMEKWFPEVERPKKHVPLKEKFVWTGLALVLYYVLAEIPVYGIPKKIQDYFQFLRVVLAGRNGSILTLGIGPIVTAGIILQLLVGSELIRLDLANPEDRRFYQALQRVFSVFMCFFEAAIWVLGGAFGRVGVDVTYTIATLMIIQLALGGIILIVLDELVSKWGIGSGISLFIAAGVSQRILTRSLNPLTDPNIIDPLTGKPAIVGAIPYFIQHILDGDLKGALYRGGSAPDMIAVTATIIVFLVVVYFESMRVEIPLGYRGVTIRGRYPIKFLYVSNIPIILTFALYANIQLWARVLDRFGHPWLGRFDPVTGNPIGGFVLYVIPPRNIFTVIDNPVRAIIYLILTIIFSLLFGFLWVELTGLDARTIARQLQRAGLQIPGFRRDPRTLERVLQKYIPYVTFWGSLTVALISVLADFLGALGTGTGILLTVGILYRFYEEIAREQITEMFPALRRLFKG</sequence>
<keyword id="KW-1003">Cell membrane</keyword>
<keyword id="KW-0472">Membrane</keyword>
<keyword id="KW-0653">Protein transport</keyword>
<keyword id="KW-0811">Translocation</keyword>
<keyword id="KW-0812">Transmembrane</keyword>
<keyword id="KW-1133">Transmembrane helix</keyword>
<keyword id="KW-0813">Transport</keyword>